<evidence type="ECO:0000255" key="1">
    <source>
        <dbReference type="HAMAP-Rule" id="MF_01451"/>
    </source>
</evidence>
<evidence type="ECO:0000305" key="2"/>
<feature type="chain" id="PRO_0000379252" description="ATP-dependent helicase/nuclease subunit A">
    <location>
        <begin position="1"/>
        <end position="1279"/>
    </location>
</feature>
<feature type="domain" description="UvrD-like helicase ATP-binding" evidence="1">
    <location>
        <begin position="4"/>
        <end position="499"/>
    </location>
</feature>
<feature type="domain" description="UvrD-like helicase C-terminal" evidence="1">
    <location>
        <begin position="526"/>
        <end position="853"/>
    </location>
</feature>
<feature type="binding site" evidence="1">
    <location>
        <begin position="25"/>
        <end position="32"/>
    </location>
    <ligand>
        <name>ATP</name>
        <dbReference type="ChEBI" id="CHEBI:30616"/>
    </ligand>
</feature>
<feature type="sequence conflict" description="In Ref. 2; ABS36619." evidence="2" ref="2">
    <original>N</original>
    <variation>S</variation>
    <location>
        <position position="1156"/>
    </location>
</feature>
<protein>
    <recommendedName>
        <fullName evidence="1">ATP-dependent helicase/nuclease subunit A</fullName>
        <ecNumber evidence="1">3.1.-.-</ecNumber>
        <ecNumber evidence="1">5.6.2.4</ecNumber>
    </recommendedName>
    <alternativeName>
        <fullName evidence="1">ATP-dependent helicase/nuclease AddA</fullName>
    </alternativeName>
    <alternativeName>
        <fullName evidence="1">DNA 3'-5' helicase AddA</fullName>
    </alternativeName>
</protein>
<comment type="function">
    <text evidence="1">The heterodimer acts as both an ATP-dependent DNA helicase and an ATP-dependent, dual-direction single-stranded exonuclease. Recognizes the chi site generating a DNA molecule suitable for the initiation of homologous recombination. The AddA nuclease domain is required for chi fragment generation; this subunit has the helicase and 3' -&gt; 5' nuclease activities.</text>
</comment>
<comment type="catalytic activity">
    <reaction evidence="1">
        <text>Couples ATP hydrolysis with the unwinding of duplex DNA by translocating in the 3'-5' direction.</text>
        <dbReference type="EC" id="5.6.2.4"/>
    </reaction>
</comment>
<comment type="catalytic activity">
    <reaction evidence="1">
        <text>ATP + H2O = ADP + phosphate + H(+)</text>
        <dbReference type="Rhea" id="RHEA:13065"/>
        <dbReference type="ChEBI" id="CHEBI:15377"/>
        <dbReference type="ChEBI" id="CHEBI:15378"/>
        <dbReference type="ChEBI" id="CHEBI:30616"/>
        <dbReference type="ChEBI" id="CHEBI:43474"/>
        <dbReference type="ChEBI" id="CHEBI:456216"/>
        <dbReference type="EC" id="5.6.2.4"/>
    </reaction>
</comment>
<comment type="cofactor">
    <cofactor evidence="1">
        <name>Mg(2+)</name>
        <dbReference type="ChEBI" id="CHEBI:18420"/>
    </cofactor>
</comment>
<comment type="subunit">
    <text evidence="1">Heterodimer of AddA and AddB/RexB.</text>
</comment>
<comment type="similarity">
    <text evidence="1">Belongs to the helicase family. AddA subfamily.</text>
</comment>
<accession>A5HYY0</accession>
<accession>A7G0X7</accession>
<reference key="1">
    <citation type="journal article" date="2007" name="Genome Res.">
        <title>Genome sequence of a proteolytic (Group I) Clostridium botulinum strain Hall A and comparative analysis of the clostridial genomes.</title>
        <authorList>
            <person name="Sebaihia M."/>
            <person name="Peck M.W."/>
            <person name="Minton N.P."/>
            <person name="Thomson N.R."/>
            <person name="Holden M.T.G."/>
            <person name="Mitchell W.J."/>
            <person name="Carter A.T."/>
            <person name="Bentley S.D."/>
            <person name="Mason D.R."/>
            <person name="Crossman L."/>
            <person name="Paul C.J."/>
            <person name="Ivens A."/>
            <person name="Wells-Bennik M.H.J."/>
            <person name="Davis I.J."/>
            <person name="Cerdeno-Tarraga A.M."/>
            <person name="Churcher C."/>
            <person name="Quail M.A."/>
            <person name="Chillingworth T."/>
            <person name="Feltwell T."/>
            <person name="Fraser A."/>
            <person name="Goodhead I."/>
            <person name="Hance Z."/>
            <person name="Jagels K."/>
            <person name="Larke N."/>
            <person name="Maddison M."/>
            <person name="Moule S."/>
            <person name="Mungall K."/>
            <person name="Norbertczak H."/>
            <person name="Rabbinowitsch E."/>
            <person name="Sanders M."/>
            <person name="Simmonds M."/>
            <person name="White B."/>
            <person name="Whithead S."/>
            <person name="Parkhill J."/>
        </authorList>
    </citation>
    <scope>NUCLEOTIDE SEQUENCE [LARGE SCALE GENOMIC DNA]</scope>
    <source>
        <strain>Hall / ATCC 3502 / NCTC 13319 / Type A</strain>
    </source>
</reference>
<reference key="2">
    <citation type="journal article" date="2007" name="PLoS ONE">
        <title>Analysis of the neurotoxin complex genes in Clostridium botulinum A1-A4 and B1 strains: BoNT/A3, /Ba4 and /B1 clusters are located within plasmids.</title>
        <authorList>
            <person name="Smith T.J."/>
            <person name="Hill K.K."/>
            <person name="Foley B.T."/>
            <person name="Detter J.C."/>
            <person name="Munk A.C."/>
            <person name="Bruce D.C."/>
            <person name="Doggett N.A."/>
            <person name="Smith L.A."/>
            <person name="Marks J.D."/>
            <person name="Xie G."/>
            <person name="Brettin T.S."/>
        </authorList>
    </citation>
    <scope>NUCLEOTIDE SEQUENCE [LARGE SCALE GENOMIC DNA]</scope>
    <source>
        <strain>Hall / ATCC 3502 / NCTC 13319 / Type A</strain>
    </source>
</reference>
<dbReference type="EC" id="3.1.-.-" evidence="1"/>
<dbReference type="EC" id="5.6.2.4" evidence="1"/>
<dbReference type="EMBL" id="AM412317">
    <property type="protein sequence ID" value="CAL81989.1"/>
    <property type="molecule type" value="Genomic_DNA"/>
</dbReference>
<dbReference type="EMBL" id="CP000727">
    <property type="protein sequence ID" value="ABS36619.1"/>
    <property type="molecule type" value="Genomic_DNA"/>
</dbReference>
<dbReference type="RefSeq" id="YP_001252980.1">
    <property type="nucleotide sequence ID" value="NC_009495.1"/>
</dbReference>
<dbReference type="RefSeq" id="YP_001386396.1">
    <property type="nucleotide sequence ID" value="NC_009698.1"/>
</dbReference>
<dbReference type="SMR" id="A5HYY0"/>
<dbReference type="GeneID" id="5184691"/>
<dbReference type="KEGG" id="cbh:CLC_0511"/>
<dbReference type="KEGG" id="cbo:CBO0436"/>
<dbReference type="PATRIC" id="fig|413999.7.peg.440"/>
<dbReference type="HOGENOM" id="CLU_001114_3_1_9"/>
<dbReference type="PRO" id="PR:A5HYY0"/>
<dbReference type="Proteomes" id="UP000001986">
    <property type="component" value="Chromosome"/>
</dbReference>
<dbReference type="GO" id="GO:0005829">
    <property type="term" value="C:cytosol"/>
    <property type="evidence" value="ECO:0000318"/>
    <property type="project" value="GO_Central"/>
</dbReference>
<dbReference type="GO" id="GO:0033202">
    <property type="term" value="C:DNA helicase complex"/>
    <property type="evidence" value="ECO:0000318"/>
    <property type="project" value="GO_Central"/>
</dbReference>
<dbReference type="GO" id="GO:0043138">
    <property type="term" value="F:3'-5' DNA helicase activity"/>
    <property type="evidence" value="ECO:0000318"/>
    <property type="project" value="GO_Central"/>
</dbReference>
<dbReference type="GO" id="GO:0008408">
    <property type="term" value="F:3'-5' exonuclease activity"/>
    <property type="evidence" value="ECO:0007669"/>
    <property type="project" value="UniProtKB-UniRule"/>
</dbReference>
<dbReference type="GO" id="GO:0005524">
    <property type="term" value="F:ATP binding"/>
    <property type="evidence" value="ECO:0007669"/>
    <property type="project" value="UniProtKB-UniRule"/>
</dbReference>
<dbReference type="GO" id="GO:0016887">
    <property type="term" value="F:ATP hydrolysis activity"/>
    <property type="evidence" value="ECO:0007669"/>
    <property type="project" value="RHEA"/>
</dbReference>
<dbReference type="GO" id="GO:0003690">
    <property type="term" value="F:double-stranded DNA binding"/>
    <property type="evidence" value="ECO:0007669"/>
    <property type="project" value="UniProtKB-UniRule"/>
</dbReference>
<dbReference type="GO" id="GO:0000724">
    <property type="term" value="P:double-strand break repair via homologous recombination"/>
    <property type="evidence" value="ECO:0007669"/>
    <property type="project" value="UniProtKB-UniRule"/>
</dbReference>
<dbReference type="GO" id="GO:0000725">
    <property type="term" value="P:recombinational repair"/>
    <property type="evidence" value="ECO:0000318"/>
    <property type="project" value="GO_Central"/>
</dbReference>
<dbReference type="FunFam" id="3.40.50.300:FF:001164">
    <property type="entry name" value="ATP-dependent helicase/nuclease subunit A"/>
    <property type="match status" value="1"/>
</dbReference>
<dbReference type="FunFam" id="3.40.50.300:FF:001196">
    <property type="entry name" value="ATP-dependent helicase/nuclease subunit A"/>
    <property type="match status" value="1"/>
</dbReference>
<dbReference type="FunFam" id="3.40.50.300:FF:001236">
    <property type="entry name" value="ATP-dependent helicase/nuclease subunit A"/>
    <property type="match status" value="1"/>
</dbReference>
<dbReference type="Gene3D" id="3.90.320.10">
    <property type="match status" value="1"/>
</dbReference>
<dbReference type="Gene3D" id="3.40.50.300">
    <property type="entry name" value="P-loop containing nucleotide triphosphate hydrolases"/>
    <property type="match status" value="4"/>
</dbReference>
<dbReference type="HAMAP" id="MF_01451">
    <property type="entry name" value="AddA"/>
    <property type="match status" value="1"/>
</dbReference>
<dbReference type="InterPro" id="IPR014152">
    <property type="entry name" value="AddA"/>
</dbReference>
<dbReference type="InterPro" id="IPR014017">
    <property type="entry name" value="DNA_helicase_UvrD-like_C"/>
</dbReference>
<dbReference type="InterPro" id="IPR000212">
    <property type="entry name" value="DNA_helicase_UvrD/REP"/>
</dbReference>
<dbReference type="InterPro" id="IPR027417">
    <property type="entry name" value="P-loop_NTPase"/>
</dbReference>
<dbReference type="InterPro" id="IPR011604">
    <property type="entry name" value="PDDEXK-like_dom_sf"/>
</dbReference>
<dbReference type="InterPro" id="IPR038726">
    <property type="entry name" value="PDDEXK_AddAB-type"/>
</dbReference>
<dbReference type="InterPro" id="IPR011335">
    <property type="entry name" value="Restrct_endonuc-II-like"/>
</dbReference>
<dbReference type="InterPro" id="IPR014016">
    <property type="entry name" value="UvrD-like_ATP-bd"/>
</dbReference>
<dbReference type="NCBIfam" id="TIGR02785">
    <property type="entry name" value="addA_Gpos"/>
    <property type="match status" value="1"/>
</dbReference>
<dbReference type="PANTHER" id="PTHR11070:SF48">
    <property type="entry name" value="ATP-DEPENDENT HELICASE_NUCLEASE SUBUNIT A"/>
    <property type="match status" value="1"/>
</dbReference>
<dbReference type="PANTHER" id="PTHR11070">
    <property type="entry name" value="UVRD / RECB / PCRA DNA HELICASE FAMILY MEMBER"/>
    <property type="match status" value="1"/>
</dbReference>
<dbReference type="Pfam" id="PF12705">
    <property type="entry name" value="PDDEXK_1"/>
    <property type="match status" value="1"/>
</dbReference>
<dbReference type="Pfam" id="PF00580">
    <property type="entry name" value="UvrD-helicase"/>
    <property type="match status" value="1"/>
</dbReference>
<dbReference type="Pfam" id="PF13361">
    <property type="entry name" value="UvrD_C"/>
    <property type="match status" value="1"/>
</dbReference>
<dbReference type="SUPFAM" id="SSF52540">
    <property type="entry name" value="P-loop containing nucleoside triphosphate hydrolases"/>
    <property type="match status" value="1"/>
</dbReference>
<dbReference type="SUPFAM" id="SSF52980">
    <property type="entry name" value="Restriction endonuclease-like"/>
    <property type="match status" value="1"/>
</dbReference>
<dbReference type="PROSITE" id="PS51198">
    <property type="entry name" value="UVRD_HELICASE_ATP_BIND"/>
    <property type="match status" value="1"/>
</dbReference>
<dbReference type="PROSITE" id="PS51217">
    <property type="entry name" value="UVRD_HELICASE_CTER"/>
    <property type="match status" value="1"/>
</dbReference>
<name>ADDA_CLOBH</name>
<keyword id="KW-0067">ATP-binding</keyword>
<keyword id="KW-0227">DNA damage</keyword>
<keyword id="KW-0234">DNA repair</keyword>
<keyword id="KW-0238">DNA-binding</keyword>
<keyword id="KW-0269">Exonuclease</keyword>
<keyword id="KW-0347">Helicase</keyword>
<keyword id="KW-0378">Hydrolase</keyword>
<keyword id="KW-0413">Isomerase</keyword>
<keyword id="KW-0540">Nuclease</keyword>
<keyword id="KW-0547">Nucleotide-binding</keyword>
<keyword id="KW-1185">Reference proteome</keyword>
<organism>
    <name type="scientific">Clostridium botulinum (strain Hall / ATCC 3502 / NCTC 13319 / Type A)</name>
    <dbReference type="NCBI Taxonomy" id="441771"/>
    <lineage>
        <taxon>Bacteria</taxon>
        <taxon>Bacillati</taxon>
        <taxon>Bacillota</taxon>
        <taxon>Clostridia</taxon>
        <taxon>Eubacteriales</taxon>
        <taxon>Clostridiaceae</taxon>
        <taxon>Clostridium</taxon>
    </lineage>
</organism>
<sequence>MSGTKWTDEQRQAIFTKDCNLLVAAGAGAGKTAVLVQRIIEKILDKGEPIDIDKLLVVTFTNAAAAEMRERIGDAISKGLDEDPESKVLRKQLTLLNKSNIMTIHSFCLQVIKNNFHTMEIDPNFRICDETEGILMKQEAIDELFDELYEIENEDFINLVESYASRKDTRLQEVVLELHRFAKSAPFSYDWLLNMAEEFNVGEEFNFEETPWADMIMEDMKVLLHGFKNMLQQSIDVILNSEGIDYYYEPFKMDLSFINSLLEKSSFKEFRGEIIAYDFPKLPLKRNKDADKEAKERVKKLRDKVKKKIVELKNILDSYENEFIKKEFIFLYPSMKALSNLVILFDKKYEAKKRERDLIDFNDIEHLCLSILTDKNSEGHIIPSDIALDYRKKFAEVLIDEYQDSNLVQEVIMSMVSRVKGYWSFYNGQLMFNEEEINLEEPQICLDIPNRFMVGDVKQSIYRFRQAKPEIFLDKYNEYSEEEGTKNRKVKLFKNFRSRKEVINGVNYLFKQIMSKTIGELDYTEEEALKVGASYGEEVKGEPIELCLMDKKYEISEEVLKEYNVDEEEALDNIQLEGRLVAKKIQKLVGNNLEGGLKVFDKKLGEYRNLQYRDIVILMRATSNWAPIFVEELAKEGIPVFADTNSGYFDTAEIKTMISLLQIIDNPLQDIPLLSVLRSPIASFTDDELIDIRMVNKNITFYECMEIIYRLYKNEKLDSYYSFYIEDENKINKIIKDMNEKLKNKICSFIEKLKLWREKSIHIDIDEFIWFLYVETGYYGYAGALQAGEQRQANLRILFQRAKQYAKTSYKGLFNFINFINKLKFSSGDMGSAKILGENENVVRIMSIHKSKGLEFPVVILSGTGKNFNMTDLNKNILFHRDLGYGPDYVDTERRIAYPSLVKNIIKNKIRLETLSEEMRILYVALTRAREKLIITGLINNMDKTVEDWLNLSEDKNKVPEYAVMSGKTYLDWIGPALIKHKDAVSFREELKMTSELSNIVDDKSKWKIELWNKRELLKEKVEEDEVEISEKIKETLMNLEESNYKEEIYKRLSFKYKYDNASSIPTKLSVSDVKKQFILDEKENTEELFKKLELRKPMFMEEKKKISPSERGTIIHLFMQHLDLKKAENEEDIKEQINRLIEREFITYEQSKVINPYKILKFCRGELGKRILNSNNVNKEMPFSIEIPALEIYKELDKEIYKDEKLIIQGVIDCYFEEEDGLVLLDYKTDYVNDIEEIKNRYEIQIKYYEEALNRITGKNVKDKYLYLFSVDNYIKID</sequence>
<gene>
    <name evidence="1" type="primary">addA</name>
    <name type="ordered locus">CBO0436</name>
    <name type="ordered locus">CLC_0511</name>
</gene>
<proteinExistence type="inferred from homology"/>